<evidence type="ECO:0000255" key="1">
    <source>
        <dbReference type="HAMAP-Rule" id="MF_01345"/>
    </source>
</evidence>
<evidence type="ECO:0000305" key="2"/>
<proteinExistence type="inferred from homology"/>
<name>RS17_PHYAS</name>
<comment type="function">
    <text evidence="1">One of the primary rRNA binding proteins, it binds specifically to the 5'-end of 16S ribosomal RNA.</text>
</comment>
<comment type="subunit">
    <text evidence="1">Part of the 30S ribosomal subunit.</text>
</comment>
<comment type="similarity">
    <text evidence="1">Belongs to the universal ribosomal protein uS17 family.</text>
</comment>
<gene>
    <name evidence="1" type="primary">rpsQ</name>
    <name type="ordered locus">PA0578</name>
</gene>
<protein>
    <recommendedName>
        <fullName evidence="1">Small ribosomal subunit protein uS17</fullName>
    </recommendedName>
    <alternativeName>
        <fullName evidence="2">30S ribosomal protein S17</fullName>
    </alternativeName>
</protein>
<dbReference type="EMBL" id="AM422018">
    <property type="protein sequence ID" value="CAM11912.1"/>
    <property type="molecule type" value="Genomic_DNA"/>
</dbReference>
<dbReference type="SMR" id="B1VAD9"/>
<dbReference type="STRING" id="59748.PA0578"/>
<dbReference type="KEGG" id="pal:PA0578"/>
<dbReference type="eggNOG" id="COG0186">
    <property type="taxonomic scope" value="Bacteria"/>
</dbReference>
<dbReference type="Proteomes" id="UP000008323">
    <property type="component" value="Chromosome"/>
</dbReference>
<dbReference type="GO" id="GO:0022627">
    <property type="term" value="C:cytosolic small ribosomal subunit"/>
    <property type="evidence" value="ECO:0007669"/>
    <property type="project" value="TreeGrafter"/>
</dbReference>
<dbReference type="GO" id="GO:0019843">
    <property type="term" value="F:rRNA binding"/>
    <property type="evidence" value="ECO:0007669"/>
    <property type="project" value="UniProtKB-UniRule"/>
</dbReference>
<dbReference type="GO" id="GO:0003735">
    <property type="term" value="F:structural constituent of ribosome"/>
    <property type="evidence" value="ECO:0007669"/>
    <property type="project" value="InterPro"/>
</dbReference>
<dbReference type="GO" id="GO:0006412">
    <property type="term" value="P:translation"/>
    <property type="evidence" value="ECO:0007669"/>
    <property type="project" value="UniProtKB-UniRule"/>
</dbReference>
<dbReference type="CDD" id="cd00364">
    <property type="entry name" value="Ribosomal_uS17"/>
    <property type="match status" value="1"/>
</dbReference>
<dbReference type="Gene3D" id="2.40.50.140">
    <property type="entry name" value="Nucleic acid-binding proteins"/>
    <property type="match status" value="1"/>
</dbReference>
<dbReference type="HAMAP" id="MF_01345_B">
    <property type="entry name" value="Ribosomal_uS17_B"/>
    <property type="match status" value="1"/>
</dbReference>
<dbReference type="InterPro" id="IPR012340">
    <property type="entry name" value="NA-bd_OB-fold"/>
</dbReference>
<dbReference type="InterPro" id="IPR000266">
    <property type="entry name" value="Ribosomal_uS17"/>
</dbReference>
<dbReference type="InterPro" id="IPR019984">
    <property type="entry name" value="Ribosomal_uS17_bact/chlr"/>
</dbReference>
<dbReference type="NCBIfam" id="NF004123">
    <property type="entry name" value="PRK05610.1"/>
    <property type="match status" value="1"/>
</dbReference>
<dbReference type="NCBIfam" id="TIGR03635">
    <property type="entry name" value="uS17_bact"/>
    <property type="match status" value="1"/>
</dbReference>
<dbReference type="PANTHER" id="PTHR10744">
    <property type="entry name" value="40S RIBOSOMAL PROTEIN S11 FAMILY MEMBER"/>
    <property type="match status" value="1"/>
</dbReference>
<dbReference type="PANTHER" id="PTHR10744:SF1">
    <property type="entry name" value="SMALL RIBOSOMAL SUBUNIT PROTEIN US17M"/>
    <property type="match status" value="1"/>
</dbReference>
<dbReference type="Pfam" id="PF00366">
    <property type="entry name" value="Ribosomal_S17"/>
    <property type="match status" value="1"/>
</dbReference>
<dbReference type="PRINTS" id="PR00973">
    <property type="entry name" value="RIBOSOMALS17"/>
</dbReference>
<dbReference type="SUPFAM" id="SSF50249">
    <property type="entry name" value="Nucleic acid-binding proteins"/>
    <property type="match status" value="1"/>
</dbReference>
<organism>
    <name type="scientific">Phytoplasma australiense</name>
    <dbReference type="NCBI Taxonomy" id="59748"/>
    <lineage>
        <taxon>Bacteria</taxon>
        <taxon>Bacillati</taxon>
        <taxon>Mycoplasmatota</taxon>
        <taxon>Mollicutes</taxon>
        <taxon>Acholeplasmatales</taxon>
        <taxon>Acholeplasmataceae</taxon>
        <taxon>Candidatus Phytoplasma</taxon>
        <taxon>16SrXII (Stolbur group)</taxon>
    </lineage>
</organism>
<keyword id="KW-1185">Reference proteome</keyword>
<keyword id="KW-0687">Ribonucleoprotein</keyword>
<keyword id="KW-0689">Ribosomal protein</keyword>
<keyword id="KW-0694">RNA-binding</keyword>
<keyword id="KW-0699">rRNA-binding</keyword>
<sequence length="95" mass="11084">MKRNSRKTFVGKVVSDKMQKTITVVVDIYKKDPLYGKRVRQSKKFHVHDEEQVAKIGNLVNFMETRPLSKTKKFRLLKVLSHGKESEVRHSGETK</sequence>
<feature type="chain" id="PRO_1000143283" description="Small ribosomal subunit protein uS17">
    <location>
        <begin position="1"/>
        <end position="95"/>
    </location>
</feature>
<reference key="1">
    <citation type="journal article" date="2008" name="J. Bacteriol.">
        <title>Comparative genome analysis of 'Candidatus Phytoplasma australiense' (subgroup tuf-Australia I; rp-A) and 'Ca. Phytoplasma asteris' strains OY-M and AY-WB.</title>
        <authorList>
            <person name="Tran-Nguyen L.T."/>
            <person name="Kube M."/>
            <person name="Schneider B."/>
            <person name="Reinhardt R."/>
            <person name="Gibb K.S."/>
        </authorList>
    </citation>
    <scope>NUCLEOTIDE SEQUENCE [LARGE SCALE GENOMIC DNA]</scope>
</reference>
<accession>B1VAD9</accession>